<protein>
    <recommendedName>
        <fullName evidence="1">4-hydroxybenzoate octaprenyltransferase</fullName>
        <ecNumber evidence="1">2.5.1.39</ecNumber>
    </recommendedName>
    <alternativeName>
        <fullName evidence="1">4-HB polyprenyltransferase</fullName>
    </alternativeName>
</protein>
<organism>
    <name type="scientific">Escherichia coli (strain ATCC 8739 / DSM 1576 / NBRC 3972 / NCIMB 8545 / WDCM 00012 / Crooks)</name>
    <dbReference type="NCBI Taxonomy" id="481805"/>
    <lineage>
        <taxon>Bacteria</taxon>
        <taxon>Pseudomonadati</taxon>
        <taxon>Pseudomonadota</taxon>
        <taxon>Gammaproteobacteria</taxon>
        <taxon>Enterobacterales</taxon>
        <taxon>Enterobacteriaceae</taxon>
        <taxon>Escherichia</taxon>
    </lineage>
</organism>
<feature type="chain" id="PRO_1000088173" description="4-hydroxybenzoate octaprenyltransferase">
    <location>
        <begin position="1"/>
        <end position="290"/>
    </location>
</feature>
<feature type="transmembrane region" description="Helical" evidence="1">
    <location>
        <begin position="23"/>
        <end position="43"/>
    </location>
</feature>
<feature type="transmembrane region" description="Helical" evidence="1">
    <location>
        <begin position="46"/>
        <end position="66"/>
    </location>
</feature>
<feature type="transmembrane region" description="Helical" evidence="1">
    <location>
        <begin position="99"/>
        <end position="119"/>
    </location>
</feature>
<feature type="transmembrane region" description="Helical" evidence="1">
    <location>
        <begin position="141"/>
        <end position="161"/>
    </location>
</feature>
<feature type="transmembrane region" description="Helical" evidence="1">
    <location>
        <begin position="163"/>
        <end position="183"/>
    </location>
</feature>
<feature type="transmembrane region" description="Helical" evidence="1">
    <location>
        <begin position="213"/>
        <end position="233"/>
    </location>
</feature>
<feature type="transmembrane region" description="Helical" evidence="1">
    <location>
        <begin position="234"/>
        <end position="254"/>
    </location>
</feature>
<feature type="transmembrane region" description="Helical" evidence="1">
    <location>
        <begin position="268"/>
        <end position="288"/>
    </location>
</feature>
<gene>
    <name evidence="1" type="primary">ubiA</name>
    <name type="ordered locus">EcolC_3988</name>
</gene>
<dbReference type="EC" id="2.5.1.39" evidence="1"/>
<dbReference type="EMBL" id="CP000946">
    <property type="protein sequence ID" value="ACA79589.1"/>
    <property type="molecule type" value="Genomic_DNA"/>
</dbReference>
<dbReference type="RefSeq" id="WP_000455227.1">
    <property type="nucleotide sequence ID" value="NZ_MTFT01000033.1"/>
</dbReference>
<dbReference type="SMR" id="B1IUL2"/>
<dbReference type="GeneID" id="93777791"/>
<dbReference type="KEGG" id="ecl:EcolC_3988"/>
<dbReference type="HOGENOM" id="CLU_034879_1_0_6"/>
<dbReference type="UniPathway" id="UPA00232"/>
<dbReference type="GO" id="GO:0005886">
    <property type="term" value="C:plasma membrane"/>
    <property type="evidence" value="ECO:0007669"/>
    <property type="project" value="UniProtKB-SubCell"/>
</dbReference>
<dbReference type="GO" id="GO:0008412">
    <property type="term" value="F:4-hydroxybenzoate polyprenyltransferase activity"/>
    <property type="evidence" value="ECO:0007669"/>
    <property type="project" value="UniProtKB-UniRule"/>
</dbReference>
<dbReference type="GO" id="GO:0006744">
    <property type="term" value="P:ubiquinone biosynthetic process"/>
    <property type="evidence" value="ECO:0007669"/>
    <property type="project" value="UniProtKB-UniRule"/>
</dbReference>
<dbReference type="CDD" id="cd13959">
    <property type="entry name" value="PT_UbiA_COQ2"/>
    <property type="match status" value="1"/>
</dbReference>
<dbReference type="FunFam" id="1.10.357.140:FF:000002">
    <property type="entry name" value="4-hydroxybenzoate octaprenyltransferase"/>
    <property type="match status" value="1"/>
</dbReference>
<dbReference type="FunFam" id="1.20.120.1780:FF:000001">
    <property type="entry name" value="4-hydroxybenzoate octaprenyltransferase"/>
    <property type="match status" value="1"/>
</dbReference>
<dbReference type="Gene3D" id="1.10.357.140">
    <property type="entry name" value="UbiA prenyltransferase"/>
    <property type="match status" value="1"/>
</dbReference>
<dbReference type="Gene3D" id="1.20.120.1780">
    <property type="entry name" value="UbiA prenyltransferase"/>
    <property type="match status" value="1"/>
</dbReference>
<dbReference type="HAMAP" id="MF_01635">
    <property type="entry name" value="UbiA"/>
    <property type="match status" value="1"/>
</dbReference>
<dbReference type="InterPro" id="IPR006370">
    <property type="entry name" value="HB_polyprenyltransferase-like"/>
</dbReference>
<dbReference type="InterPro" id="IPR039653">
    <property type="entry name" value="Prenyltransferase"/>
</dbReference>
<dbReference type="InterPro" id="IPR000537">
    <property type="entry name" value="UbiA_prenyltransferase"/>
</dbReference>
<dbReference type="InterPro" id="IPR030470">
    <property type="entry name" value="UbiA_prenylTrfase_CS"/>
</dbReference>
<dbReference type="InterPro" id="IPR044878">
    <property type="entry name" value="UbiA_sf"/>
</dbReference>
<dbReference type="NCBIfam" id="TIGR01474">
    <property type="entry name" value="ubiA_proteo"/>
    <property type="match status" value="1"/>
</dbReference>
<dbReference type="PANTHER" id="PTHR11048:SF28">
    <property type="entry name" value="4-HYDROXYBENZOATE POLYPRENYLTRANSFERASE, MITOCHONDRIAL"/>
    <property type="match status" value="1"/>
</dbReference>
<dbReference type="PANTHER" id="PTHR11048">
    <property type="entry name" value="PRENYLTRANSFERASES"/>
    <property type="match status" value="1"/>
</dbReference>
<dbReference type="Pfam" id="PF01040">
    <property type="entry name" value="UbiA"/>
    <property type="match status" value="1"/>
</dbReference>
<dbReference type="PROSITE" id="PS00943">
    <property type="entry name" value="UBIA"/>
    <property type="match status" value="1"/>
</dbReference>
<keyword id="KW-0997">Cell inner membrane</keyword>
<keyword id="KW-1003">Cell membrane</keyword>
<keyword id="KW-0460">Magnesium</keyword>
<keyword id="KW-0472">Membrane</keyword>
<keyword id="KW-0808">Transferase</keyword>
<keyword id="KW-0812">Transmembrane</keyword>
<keyword id="KW-1133">Transmembrane helix</keyword>
<keyword id="KW-0831">Ubiquinone biosynthesis</keyword>
<proteinExistence type="inferred from homology"/>
<evidence type="ECO:0000255" key="1">
    <source>
        <dbReference type="HAMAP-Rule" id="MF_01635"/>
    </source>
</evidence>
<sequence length="290" mass="32512">MEWSLTQNKLLAFHRLMRTDKPIGALLLLWPTLWALWVATPGVPQLWILAVFVAGVWLMRAAGCVVNDYADRKFDGHVKRTANRPLPSGAVTEKEARALFVVLVLISFLLVLTLNTMTILLSIAALALAWVYPFMKRYTHLPQVVLGAAFGWSIPMAFAAVSESVPLSCWLMFLANILWAVAYDTQYAMVDRDDDVKIGIKSTAILFGQYDKLIIGILQIGVLALMAIIGELNGLGWGYYWSILVAGALFVYQQKLIANREREACFKAFMNNNYVGLVLFLGLAMSYWHF</sequence>
<name>UBIA_ECOLC</name>
<comment type="function">
    <text evidence="1">Catalyzes the prenylation of para-hydroxybenzoate (PHB) with an all-trans polyprenyl group. Mediates the second step in the final reaction sequence of ubiquinone-8 (UQ-8) biosynthesis, which is the condensation of the polyisoprenoid side chain with PHB, generating the first membrane-bound Q intermediate 3-octaprenyl-4-hydroxybenzoate.</text>
</comment>
<comment type="catalytic activity">
    <reaction evidence="1">
        <text>all-trans-octaprenyl diphosphate + 4-hydroxybenzoate = 4-hydroxy-3-(all-trans-octaprenyl)benzoate + diphosphate</text>
        <dbReference type="Rhea" id="RHEA:27782"/>
        <dbReference type="ChEBI" id="CHEBI:1617"/>
        <dbReference type="ChEBI" id="CHEBI:17879"/>
        <dbReference type="ChEBI" id="CHEBI:33019"/>
        <dbReference type="ChEBI" id="CHEBI:57711"/>
        <dbReference type="EC" id="2.5.1.39"/>
    </reaction>
</comment>
<comment type="cofactor">
    <cofactor evidence="1">
        <name>Mg(2+)</name>
        <dbReference type="ChEBI" id="CHEBI:18420"/>
    </cofactor>
</comment>
<comment type="pathway">
    <text evidence="1">Cofactor biosynthesis; ubiquinone biosynthesis.</text>
</comment>
<comment type="subcellular location">
    <subcellularLocation>
        <location evidence="1">Cell inner membrane</location>
        <topology evidence="1">Multi-pass membrane protein</topology>
    </subcellularLocation>
</comment>
<comment type="similarity">
    <text evidence="1">Belongs to the UbiA prenyltransferase family.</text>
</comment>
<accession>B1IUL2</accession>
<reference key="1">
    <citation type="submission" date="2008-02" db="EMBL/GenBank/DDBJ databases">
        <title>Complete sequence of Escherichia coli C str. ATCC 8739.</title>
        <authorList>
            <person name="Copeland A."/>
            <person name="Lucas S."/>
            <person name="Lapidus A."/>
            <person name="Glavina del Rio T."/>
            <person name="Dalin E."/>
            <person name="Tice H."/>
            <person name="Bruce D."/>
            <person name="Goodwin L."/>
            <person name="Pitluck S."/>
            <person name="Kiss H."/>
            <person name="Brettin T."/>
            <person name="Detter J.C."/>
            <person name="Han C."/>
            <person name="Kuske C.R."/>
            <person name="Schmutz J."/>
            <person name="Larimer F."/>
            <person name="Land M."/>
            <person name="Hauser L."/>
            <person name="Kyrpides N."/>
            <person name="Mikhailova N."/>
            <person name="Ingram L."/>
            <person name="Richardson P."/>
        </authorList>
    </citation>
    <scope>NUCLEOTIDE SEQUENCE [LARGE SCALE GENOMIC DNA]</scope>
    <source>
        <strain>ATCC 8739 / DSM 1576 / NBRC 3972 / NCIMB 8545 / WDCM 00012 / Crooks</strain>
    </source>
</reference>